<feature type="chain" id="PRO_0000205436" description="GTPase Obg">
    <location>
        <begin position="1"/>
        <end position="333"/>
    </location>
</feature>
<feature type="domain" description="Obg" evidence="2">
    <location>
        <begin position="1"/>
        <end position="159"/>
    </location>
</feature>
<feature type="domain" description="OBG-type G" evidence="1">
    <location>
        <begin position="160"/>
        <end position="332"/>
    </location>
</feature>
<feature type="binding site" evidence="1">
    <location>
        <begin position="166"/>
        <end position="173"/>
    </location>
    <ligand>
        <name>GTP</name>
        <dbReference type="ChEBI" id="CHEBI:37565"/>
    </ligand>
</feature>
<feature type="binding site" evidence="1">
    <location>
        <position position="173"/>
    </location>
    <ligand>
        <name>Mg(2+)</name>
        <dbReference type="ChEBI" id="CHEBI:18420"/>
    </ligand>
</feature>
<feature type="binding site" evidence="1">
    <location>
        <begin position="191"/>
        <end position="195"/>
    </location>
    <ligand>
        <name>GTP</name>
        <dbReference type="ChEBI" id="CHEBI:37565"/>
    </ligand>
</feature>
<feature type="binding site" evidence="1">
    <location>
        <position position="193"/>
    </location>
    <ligand>
        <name>Mg(2+)</name>
        <dbReference type="ChEBI" id="CHEBI:18420"/>
    </ligand>
</feature>
<feature type="binding site" evidence="1">
    <location>
        <begin position="212"/>
        <end position="215"/>
    </location>
    <ligand>
        <name>GTP</name>
        <dbReference type="ChEBI" id="CHEBI:37565"/>
    </ligand>
</feature>
<feature type="binding site" evidence="1">
    <location>
        <begin position="282"/>
        <end position="285"/>
    </location>
    <ligand>
        <name>GTP</name>
        <dbReference type="ChEBI" id="CHEBI:37565"/>
    </ligand>
</feature>
<feature type="binding site" evidence="1">
    <location>
        <begin position="313"/>
        <end position="315"/>
    </location>
    <ligand>
        <name>GTP</name>
        <dbReference type="ChEBI" id="CHEBI:37565"/>
    </ligand>
</feature>
<name>OBG_BUCAP</name>
<proteinExistence type="inferred from homology"/>
<dbReference type="EC" id="3.6.5.-" evidence="1"/>
<dbReference type="EMBL" id="AE013218">
    <property type="protein sequence ID" value="AAM67928.1"/>
    <property type="molecule type" value="Genomic_DNA"/>
</dbReference>
<dbReference type="RefSeq" id="WP_011053895.1">
    <property type="nucleotide sequence ID" value="NC_004061.1"/>
</dbReference>
<dbReference type="SMR" id="Q8K9G1"/>
<dbReference type="STRING" id="198804.BUsg_376"/>
<dbReference type="GeneID" id="93003846"/>
<dbReference type="KEGG" id="bas:BUsg_376"/>
<dbReference type="eggNOG" id="COG0536">
    <property type="taxonomic scope" value="Bacteria"/>
</dbReference>
<dbReference type="HOGENOM" id="CLU_011747_2_0_6"/>
<dbReference type="Proteomes" id="UP000000416">
    <property type="component" value="Chromosome"/>
</dbReference>
<dbReference type="GO" id="GO:0005737">
    <property type="term" value="C:cytoplasm"/>
    <property type="evidence" value="ECO:0007669"/>
    <property type="project" value="UniProtKB-SubCell"/>
</dbReference>
<dbReference type="GO" id="GO:0005525">
    <property type="term" value="F:GTP binding"/>
    <property type="evidence" value="ECO:0007669"/>
    <property type="project" value="UniProtKB-UniRule"/>
</dbReference>
<dbReference type="GO" id="GO:0003924">
    <property type="term" value="F:GTPase activity"/>
    <property type="evidence" value="ECO:0007669"/>
    <property type="project" value="UniProtKB-UniRule"/>
</dbReference>
<dbReference type="GO" id="GO:0000287">
    <property type="term" value="F:magnesium ion binding"/>
    <property type="evidence" value="ECO:0007669"/>
    <property type="project" value="InterPro"/>
</dbReference>
<dbReference type="GO" id="GO:0042254">
    <property type="term" value="P:ribosome biogenesis"/>
    <property type="evidence" value="ECO:0007669"/>
    <property type="project" value="UniProtKB-UniRule"/>
</dbReference>
<dbReference type="CDD" id="cd01898">
    <property type="entry name" value="Obg"/>
    <property type="match status" value="1"/>
</dbReference>
<dbReference type="FunFam" id="2.70.210.12:FF:000001">
    <property type="entry name" value="GTPase Obg"/>
    <property type="match status" value="1"/>
</dbReference>
<dbReference type="Gene3D" id="2.70.210.12">
    <property type="entry name" value="GTP1/OBG domain"/>
    <property type="match status" value="1"/>
</dbReference>
<dbReference type="Gene3D" id="3.40.50.300">
    <property type="entry name" value="P-loop containing nucleotide triphosphate hydrolases"/>
    <property type="match status" value="1"/>
</dbReference>
<dbReference type="HAMAP" id="MF_01454">
    <property type="entry name" value="GTPase_Obg"/>
    <property type="match status" value="1"/>
</dbReference>
<dbReference type="InterPro" id="IPR031167">
    <property type="entry name" value="G_OBG"/>
</dbReference>
<dbReference type="InterPro" id="IPR006073">
    <property type="entry name" value="GTP-bd"/>
</dbReference>
<dbReference type="InterPro" id="IPR014100">
    <property type="entry name" value="GTP-bd_Obg/CgtA"/>
</dbReference>
<dbReference type="InterPro" id="IPR006074">
    <property type="entry name" value="GTP1-OBG_CS"/>
</dbReference>
<dbReference type="InterPro" id="IPR006169">
    <property type="entry name" value="GTP1_OBG_dom"/>
</dbReference>
<dbReference type="InterPro" id="IPR036726">
    <property type="entry name" value="GTP1_OBG_dom_sf"/>
</dbReference>
<dbReference type="InterPro" id="IPR045086">
    <property type="entry name" value="OBG_GTPase"/>
</dbReference>
<dbReference type="InterPro" id="IPR027417">
    <property type="entry name" value="P-loop_NTPase"/>
</dbReference>
<dbReference type="InterPro" id="IPR005225">
    <property type="entry name" value="Small_GTP-bd"/>
</dbReference>
<dbReference type="NCBIfam" id="TIGR02729">
    <property type="entry name" value="Obg_CgtA"/>
    <property type="match status" value="1"/>
</dbReference>
<dbReference type="NCBIfam" id="NF008955">
    <property type="entry name" value="PRK12297.1"/>
    <property type="match status" value="1"/>
</dbReference>
<dbReference type="NCBIfam" id="NF008956">
    <property type="entry name" value="PRK12299.1"/>
    <property type="match status" value="1"/>
</dbReference>
<dbReference type="NCBIfam" id="TIGR00231">
    <property type="entry name" value="small_GTP"/>
    <property type="match status" value="1"/>
</dbReference>
<dbReference type="PANTHER" id="PTHR11702">
    <property type="entry name" value="DEVELOPMENTALLY REGULATED GTP-BINDING PROTEIN-RELATED"/>
    <property type="match status" value="1"/>
</dbReference>
<dbReference type="PANTHER" id="PTHR11702:SF31">
    <property type="entry name" value="MITOCHONDRIAL RIBOSOME-ASSOCIATED GTPASE 2"/>
    <property type="match status" value="1"/>
</dbReference>
<dbReference type="Pfam" id="PF01018">
    <property type="entry name" value="GTP1_OBG"/>
    <property type="match status" value="1"/>
</dbReference>
<dbReference type="Pfam" id="PF01926">
    <property type="entry name" value="MMR_HSR1"/>
    <property type="match status" value="1"/>
</dbReference>
<dbReference type="PIRSF" id="PIRSF002401">
    <property type="entry name" value="GTP_bd_Obg/CgtA"/>
    <property type="match status" value="1"/>
</dbReference>
<dbReference type="PRINTS" id="PR00326">
    <property type="entry name" value="GTP1OBG"/>
</dbReference>
<dbReference type="SUPFAM" id="SSF82051">
    <property type="entry name" value="Obg GTP-binding protein N-terminal domain"/>
    <property type="match status" value="1"/>
</dbReference>
<dbReference type="SUPFAM" id="SSF52540">
    <property type="entry name" value="P-loop containing nucleoside triphosphate hydrolases"/>
    <property type="match status" value="1"/>
</dbReference>
<dbReference type="PROSITE" id="PS51710">
    <property type="entry name" value="G_OBG"/>
    <property type="match status" value="1"/>
</dbReference>
<dbReference type="PROSITE" id="PS00905">
    <property type="entry name" value="GTP1_OBG"/>
    <property type="match status" value="1"/>
</dbReference>
<dbReference type="PROSITE" id="PS51883">
    <property type="entry name" value="OBG"/>
    <property type="match status" value="1"/>
</dbReference>
<sequence>MKFIDQTIIQVIAGNGGNGCVNFRREKYIPKGGPDGGDGGDGGNVWLQSDNNLNTLIDLRFKKTFQAPHGENGSGKNCSGKKGSDIKIYVPVGTKIINYQTREIIGDLIKHKQKILIAKGGWHGLGNTRFKSSINRTPRQRTLGSVGEKRDIQLELILIADVGTLGMPNAGKSTLVKSISGAKTKIANYPFTTLNPVLGSVNTEGKKFIIADIPGIMQNASQGFGLGVRFLKHLERCKILLHIVDLCPTDHSNPVENIRIILNELKKYNTSLYNKPRWLILNKIDLIKSSEIKKIIDKIKNFLKVEERFYLISSIKKIGVKKLCSDIAFYLQK</sequence>
<evidence type="ECO:0000255" key="1">
    <source>
        <dbReference type="HAMAP-Rule" id="MF_01454"/>
    </source>
</evidence>
<evidence type="ECO:0000255" key="2">
    <source>
        <dbReference type="PROSITE-ProRule" id="PRU01231"/>
    </source>
</evidence>
<reference key="1">
    <citation type="journal article" date="2002" name="Science">
        <title>50 million years of genomic stasis in endosymbiotic bacteria.</title>
        <authorList>
            <person name="Tamas I."/>
            <person name="Klasson L."/>
            <person name="Canbaeck B."/>
            <person name="Naeslund A.K."/>
            <person name="Eriksson A.-S."/>
            <person name="Wernegreen J.J."/>
            <person name="Sandstroem J.P."/>
            <person name="Moran N.A."/>
            <person name="Andersson S.G.E."/>
        </authorList>
    </citation>
    <scope>NUCLEOTIDE SEQUENCE [LARGE SCALE GENOMIC DNA]</scope>
    <source>
        <strain>Sg</strain>
    </source>
</reference>
<keyword id="KW-0963">Cytoplasm</keyword>
<keyword id="KW-0342">GTP-binding</keyword>
<keyword id="KW-0378">Hydrolase</keyword>
<keyword id="KW-0460">Magnesium</keyword>
<keyword id="KW-0479">Metal-binding</keyword>
<keyword id="KW-0547">Nucleotide-binding</keyword>
<accession>Q8K9G1</accession>
<organism>
    <name type="scientific">Buchnera aphidicola subsp. Schizaphis graminum (strain Sg)</name>
    <dbReference type="NCBI Taxonomy" id="198804"/>
    <lineage>
        <taxon>Bacteria</taxon>
        <taxon>Pseudomonadati</taxon>
        <taxon>Pseudomonadota</taxon>
        <taxon>Gammaproteobacteria</taxon>
        <taxon>Enterobacterales</taxon>
        <taxon>Erwiniaceae</taxon>
        <taxon>Buchnera</taxon>
    </lineage>
</organism>
<comment type="function">
    <text evidence="1">An essential GTPase which binds GTP, GDP and possibly (p)ppGpp with moderate affinity, with high nucleotide exchange rates and a fairly low GTP hydrolysis rate. Plays a role in control of the cell cycle, stress response, ribosome biogenesis and in those bacteria that undergo differentiation, in morphogenesis control.</text>
</comment>
<comment type="cofactor">
    <cofactor evidence="1">
        <name>Mg(2+)</name>
        <dbReference type="ChEBI" id="CHEBI:18420"/>
    </cofactor>
</comment>
<comment type="subunit">
    <text evidence="1">Monomer.</text>
</comment>
<comment type="subcellular location">
    <subcellularLocation>
        <location evidence="1">Cytoplasm</location>
    </subcellularLocation>
</comment>
<comment type="similarity">
    <text evidence="1">Belongs to the TRAFAC class OBG-HflX-like GTPase superfamily. OBG GTPase family.</text>
</comment>
<gene>
    <name evidence="1" type="primary">obg</name>
    <name type="ordered locus">BUsg_376</name>
</gene>
<protein>
    <recommendedName>
        <fullName evidence="1">GTPase Obg</fullName>
        <ecNumber evidence="1">3.6.5.-</ecNumber>
    </recommendedName>
    <alternativeName>
        <fullName evidence="1">GTP-binding protein Obg</fullName>
    </alternativeName>
</protein>